<protein>
    <recommendedName>
        <fullName evidence="1">DNA-directed RNA polymerase subunit omega</fullName>
        <shortName evidence="1">RNAP omega subunit</shortName>
        <ecNumber evidence="1">2.7.7.6</ecNumber>
    </recommendedName>
    <alternativeName>
        <fullName evidence="1">RNA polymerase omega subunit</fullName>
    </alternativeName>
    <alternativeName>
        <fullName evidence="1">Transcriptase subunit omega</fullName>
    </alternativeName>
</protein>
<proteinExistence type="inferred from homology"/>
<evidence type="ECO:0000255" key="1">
    <source>
        <dbReference type="HAMAP-Rule" id="MF_00366"/>
    </source>
</evidence>
<name>RPOZ_RICRS</name>
<gene>
    <name evidence="1" type="primary">rpoZ</name>
    <name type="ordered locus">A1G_04870</name>
</gene>
<accession>A8GSU9</accession>
<reference key="1">
    <citation type="submission" date="2007-09" db="EMBL/GenBank/DDBJ databases">
        <title>Complete genome sequence of Rickettsia rickettsii.</title>
        <authorList>
            <person name="Madan A."/>
            <person name="Fahey J."/>
            <person name="Helton E."/>
            <person name="Ketteman M."/>
            <person name="Madan A."/>
            <person name="Rodrigues S."/>
            <person name="Sanchez A."/>
            <person name="Dasch G."/>
            <person name="Eremeeva M."/>
        </authorList>
    </citation>
    <scope>NUCLEOTIDE SEQUENCE [LARGE SCALE GENOMIC DNA]</scope>
    <source>
        <strain>Sheila Smith</strain>
    </source>
</reference>
<keyword id="KW-0240">DNA-directed RNA polymerase</keyword>
<keyword id="KW-0548">Nucleotidyltransferase</keyword>
<keyword id="KW-0804">Transcription</keyword>
<keyword id="KW-0808">Transferase</keyword>
<organism>
    <name type="scientific">Rickettsia rickettsii (strain Sheila Smith)</name>
    <dbReference type="NCBI Taxonomy" id="392021"/>
    <lineage>
        <taxon>Bacteria</taxon>
        <taxon>Pseudomonadati</taxon>
        <taxon>Pseudomonadota</taxon>
        <taxon>Alphaproteobacteria</taxon>
        <taxon>Rickettsiales</taxon>
        <taxon>Rickettsiaceae</taxon>
        <taxon>Rickettsieae</taxon>
        <taxon>Rickettsia</taxon>
        <taxon>spotted fever group</taxon>
    </lineage>
</organism>
<dbReference type="EC" id="2.7.7.6" evidence="1"/>
<dbReference type="EMBL" id="CP000848">
    <property type="protein sequence ID" value="ABV76474.1"/>
    <property type="molecule type" value="Genomic_DNA"/>
</dbReference>
<dbReference type="RefSeq" id="WP_012151045.1">
    <property type="nucleotide sequence ID" value="NZ_CP121767.1"/>
</dbReference>
<dbReference type="SMR" id="A8GSU9"/>
<dbReference type="GeneID" id="79937565"/>
<dbReference type="KEGG" id="rri:A1G_04870"/>
<dbReference type="HOGENOM" id="CLU_138545_0_0_5"/>
<dbReference type="Proteomes" id="UP000006832">
    <property type="component" value="Chromosome"/>
</dbReference>
<dbReference type="GO" id="GO:0000428">
    <property type="term" value="C:DNA-directed RNA polymerase complex"/>
    <property type="evidence" value="ECO:0007669"/>
    <property type="project" value="UniProtKB-KW"/>
</dbReference>
<dbReference type="GO" id="GO:0003677">
    <property type="term" value="F:DNA binding"/>
    <property type="evidence" value="ECO:0007669"/>
    <property type="project" value="UniProtKB-UniRule"/>
</dbReference>
<dbReference type="GO" id="GO:0003899">
    <property type="term" value="F:DNA-directed RNA polymerase activity"/>
    <property type="evidence" value="ECO:0007669"/>
    <property type="project" value="UniProtKB-UniRule"/>
</dbReference>
<dbReference type="GO" id="GO:0006351">
    <property type="term" value="P:DNA-templated transcription"/>
    <property type="evidence" value="ECO:0007669"/>
    <property type="project" value="UniProtKB-UniRule"/>
</dbReference>
<dbReference type="Gene3D" id="3.90.940.10">
    <property type="match status" value="1"/>
</dbReference>
<dbReference type="HAMAP" id="MF_00366">
    <property type="entry name" value="RNApol_bact_RpoZ"/>
    <property type="match status" value="1"/>
</dbReference>
<dbReference type="InterPro" id="IPR003716">
    <property type="entry name" value="DNA-dir_RNA_pol_omega"/>
</dbReference>
<dbReference type="InterPro" id="IPR006110">
    <property type="entry name" value="Pol_omega/Rpo6/RPB6"/>
</dbReference>
<dbReference type="InterPro" id="IPR036161">
    <property type="entry name" value="RPB6/omega-like_sf"/>
</dbReference>
<dbReference type="NCBIfam" id="TIGR00690">
    <property type="entry name" value="rpoZ"/>
    <property type="match status" value="1"/>
</dbReference>
<dbReference type="PANTHER" id="PTHR34476">
    <property type="entry name" value="DNA-DIRECTED RNA POLYMERASE SUBUNIT OMEGA"/>
    <property type="match status" value="1"/>
</dbReference>
<dbReference type="PANTHER" id="PTHR34476:SF1">
    <property type="entry name" value="DNA-DIRECTED RNA POLYMERASE SUBUNIT OMEGA"/>
    <property type="match status" value="1"/>
</dbReference>
<dbReference type="Pfam" id="PF01192">
    <property type="entry name" value="RNA_pol_Rpb6"/>
    <property type="match status" value="1"/>
</dbReference>
<dbReference type="SMART" id="SM01409">
    <property type="entry name" value="RNA_pol_Rpb6"/>
    <property type="match status" value="1"/>
</dbReference>
<dbReference type="SUPFAM" id="SSF63562">
    <property type="entry name" value="RPB6/omega subunit-like"/>
    <property type="match status" value="1"/>
</dbReference>
<feature type="chain" id="PRO_1000006000" description="DNA-directed RNA polymerase subunit omega">
    <location>
        <begin position="1"/>
        <end position="127"/>
    </location>
</feature>
<comment type="function">
    <text evidence="1">Promotes RNA polymerase assembly. Latches the N- and C-terminal regions of the beta' subunit thereby facilitating its interaction with the beta and alpha subunits.</text>
</comment>
<comment type="catalytic activity">
    <reaction evidence="1">
        <text>RNA(n) + a ribonucleoside 5'-triphosphate = RNA(n+1) + diphosphate</text>
        <dbReference type="Rhea" id="RHEA:21248"/>
        <dbReference type="Rhea" id="RHEA-COMP:14527"/>
        <dbReference type="Rhea" id="RHEA-COMP:17342"/>
        <dbReference type="ChEBI" id="CHEBI:33019"/>
        <dbReference type="ChEBI" id="CHEBI:61557"/>
        <dbReference type="ChEBI" id="CHEBI:140395"/>
        <dbReference type="EC" id="2.7.7.6"/>
    </reaction>
</comment>
<comment type="subunit">
    <text evidence="1">The RNAP catalytic core consists of 2 alpha, 1 beta, 1 beta' and 1 omega subunit. When a sigma factor is associated with the core the holoenzyme is formed, which can initiate transcription.</text>
</comment>
<comment type="similarity">
    <text evidence="1">Belongs to the RNA polymerase subunit omega family.</text>
</comment>
<sequence length="127" mass="14757">MARITAEDCNKIIPDRFRLVVLATRYAKLLNYKVETNHIKKEKLDKPPVIALRRIAAGKVSVAQLEQDLINSLRTRTMIEPLVNQDESEAVEEKFEYLPEVYIGEDYSDLDDQIFIDEHGEDYETDK</sequence>